<gene>
    <name evidence="1" type="primary">gpsA</name>
    <name type="ordered locus">MMOB4820</name>
</gene>
<protein>
    <recommendedName>
        <fullName evidence="1">Glycerol-3-phosphate dehydrogenase [NAD(P)+]</fullName>
        <ecNumber evidence="1">1.1.1.94</ecNumber>
    </recommendedName>
    <alternativeName>
        <fullName evidence="1">NAD(P)(+)-dependent glycerol-3-phosphate dehydrogenase</fullName>
    </alternativeName>
    <alternativeName>
        <fullName evidence="1">NAD(P)H-dependent dihydroxyacetone-phosphate reductase</fullName>
    </alternativeName>
</protein>
<sequence>MNKTNKISIIGSGAMATAMAKVLYDSGNTNIFIYGIDEKELEDLKIGKNAKYFSTDIKLPSFNTTKDLKIALDKTDYIVLAIPSIFIQATFLEILKLLNSKVLVISVSKGFYPNSFLSIHEGLSKDSKSNEFVRGVVTVTGPSFAEEIIKEQLTTICAVDSNIKNAQEVQKLFSNKYFKLYVQSDVIGAEVGASFKNVLAIFSGIANQQGYGINTLASILSRGLKEMKLYNDKVGGKLSTLLGLTGVGDLILTATSPLSRNFSFGKEFVINKSKALETVKTVEGLKALENIYRSNKKYGLDLPIISSLYELIFENISLEEFKEKIWNRTLKSEFE</sequence>
<feature type="chain" id="PRO_0000137992" description="Glycerol-3-phosphate dehydrogenase [NAD(P)+]">
    <location>
        <begin position="1"/>
        <end position="335"/>
    </location>
</feature>
<feature type="active site" description="Proton acceptor" evidence="1">
    <location>
        <position position="196"/>
    </location>
</feature>
<feature type="binding site" evidence="1">
    <location>
        <position position="109"/>
    </location>
    <ligand>
        <name>NADPH</name>
        <dbReference type="ChEBI" id="CHEBI:57783"/>
    </ligand>
</feature>
<feature type="binding site" evidence="1">
    <location>
        <position position="109"/>
    </location>
    <ligand>
        <name>sn-glycerol 3-phosphate</name>
        <dbReference type="ChEBI" id="CHEBI:57597"/>
    </ligand>
</feature>
<feature type="binding site" evidence="1">
    <location>
        <position position="141"/>
    </location>
    <ligand>
        <name>sn-glycerol 3-phosphate</name>
        <dbReference type="ChEBI" id="CHEBI:57597"/>
    </ligand>
</feature>
<feature type="binding site" evidence="1">
    <location>
        <position position="143"/>
    </location>
    <ligand>
        <name>sn-glycerol 3-phosphate</name>
        <dbReference type="ChEBI" id="CHEBI:57597"/>
    </ligand>
</feature>
<feature type="binding site" evidence="1">
    <location>
        <position position="145"/>
    </location>
    <ligand>
        <name>NADPH</name>
        <dbReference type="ChEBI" id="CHEBI:57783"/>
    </ligand>
</feature>
<feature type="binding site" evidence="1">
    <location>
        <position position="196"/>
    </location>
    <ligand>
        <name>sn-glycerol 3-phosphate</name>
        <dbReference type="ChEBI" id="CHEBI:57597"/>
    </ligand>
</feature>
<feature type="binding site" evidence="1">
    <location>
        <position position="249"/>
    </location>
    <ligand>
        <name>sn-glycerol 3-phosphate</name>
        <dbReference type="ChEBI" id="CHEBI:57597"/>
    </ligand>
</feature>
<feature type="binding site" evidence="1">
    <location>
        <position position="259"/>
    </location>
    <ligand>
        <name>sn-glycerol 3-phosphate</name>
        <dbReference type="ChEBI" id="CHEBI:57597"/>
    </ligand>
</feature>
<feature type="binding site" evidence="1">
    <location>
        <position position="260"/>
    </location>
    <ligand>
        <name>NADPH</name>
        <dbReference type="ChEBI" id="CHEBI:57783"/>
    </ligand>
</feature>
<feature type="binding site" evidence="1">
    <location>
        <position position="260"/>
    </location>
    <ligand>
        <name>sn-glycerol 3-phosphate</name>
        <dbReference type="ChEBI" id="CHEBI:57597"/>
    </ligand>
</feature>
<feature type="binding site" evidence="1">
    <location>
        <position position="261"/>
    </location>
    <ligand>
        <name>sn-glycerol 3-phosphate</name>
        <dbReference type="ChEBI" id="CHEBI:57597"/>
    </ligand>
</feature>
<feature type="binding site" evidence="1">
    <location>
        <position position="283"/>
    </location>
    <ligand>
        <name>NADPH</name>
        <dbReference type="ChEBI" id="CHEBI:57783"/>
    </ligand>
</feature>
<reference key="1">
    <citation type="journal article" date="2004" name="Genome Res.">
        <title>The complete genome and proteome of Mycoplasma mobile.</title>
        <authorList>
            <person name="Jaffe J.D."/>
            <person name="Stange-Thomann N."/>
            <person name="Smith C."/>
            <person name="DeCaprio D."/>
            <person name="Fisher S."/>
            <person name="Butler J."/>
            <person name="Calvo S."/>
            <person name="Elkins T."/>
            <person name="FitzGerald M.G."/>
            <person name="Hafez N."/>
            <person name="Kodira C.D."/>
            <person name="Major J."/>
            <person name="Wang S."/>
            <person name="Wilkinson J."/>
            <person name="Nicol R."/>
            <person name="Nusbaum C."/>
            <person name="Birren B."/>
            <person name="Berg H.C."/>
            <person name="Church G.M."/>
        </authorList>
    </citation>
    <scope>NUCLEOTIDE SEQUENCE [LARGE SCALE GENOMIC DNA]</scope>
    <source>
        <strain>ATCC 43663 / NCTC 11711 / 163 K</strain>
    </source>
</reference>
<comment type="function">
    <text evidence="1">Catalyzes the reduction of the glycolytic intermediate dihydroxyacetone phosphate (DHAP) to sn-glycerol 3-phosphate (G3P), the key precursor for phospholipid synthesis.</text>
</comment>
<comment type="catalytic activity">
    <reaction evidence="1">
        <text>sn-glycerol 3-phosphate + NAD(+) = dihydroxyacetone phosphate + NADH + H(+)</text>
        <dbReference type="Rhea" id="RHEA:11092"/>
        <dbReference type="ChEBI" id="CHEBI:15378"/>
        <dbReference type="ChEBI" id="CHEBI:57540"/>
        <dbReference type="ChEBI" id="CHEBI:57597"/>
        <dbReference type="ChEBI" id="CHEBI:57642"/>
        <dbReference type="ChEBI" id="CHEBI:57945"/>
        <dbReference type="EC" id="1.1.1.94"/>
    </reaction>
    <physiologicalReaction direction="right-to-left" evidence="1">
        <dbReference type="Rhea" id="RHEA:11094"/>
    </physiologicalReaction>
</comment>
<comment type="catalytic activity">
    <reaction evidence="1">
        <text>sn-glycerol 3-phosphate + NADP(+) = dihydroxyacetone phosphate + NADPH + H(+)</text>
        <dbReference type="Rhea" id="RHEA:11096"/>
        <dbReference type="ChEBI" id="CHEBI:15378"/>
        <dbReference type="ChEBI" id="CHEBI:57597"/>
        <dbReference type="ChEBI" id="CHEBI:57642"/>
        <dbReference type="ChEBI" id="CHEBI:57783"/>
        <dbReference type="ChEBI" id="CHEBI:58349"/>
        <dbReference type="EC" id="1.1.1.94"/>
    </reaction>
    <physiologicalReaction direction="right-to-left" evidence="1">
        <dbReference type="Rhea" id="RHEA:11098"/>
    </physiologicalReaction>
</comment>
<comment type="pathway">
    <text evidence="1">Membrane lipid metabolism; glycerophospholipid metabolism.</text>
</comment>
<comment type="subcellular location">
    <subcellularLocation>
        <location evidence="1">Cytoplasm</location>
    </subcellularLocation>
</comment>
<comment type="similarity">
    <text evidence="1">Belongs to the NAD-dependent glycerol-3-phosphate dehydrogenase family.</text>
</comment>
<comment type="sequence caution" evidence="2">
    <conflict type="erroneous initiation">
        <sequence resource="EMBL-CDS" id="AAT27968"/>
    </conflict>
</comment>
<dbReference type="EC" id="1.1.1.94" evidence="1"/>
<dbReference type="EMBL" id="AE017308">
    <property type="protein sequence ID" value="AAT27968.1"/>
    <property type="status" value="ALT_INIT"/>
    <property type="molecule type" value="Genomic_DNA"/>
</dbReference>
<dbReference type="RefSeq" id="WP_041363130.1">
    <property type="nucleotide sequence ID" value="NC_006908.1"/>
</dbReference>
<dbReference type="SMR" id="Q6KHG2"/>
<dbReference type="STRING" id="267748.MMOB4820"/>
<dbReference type="KEGG" id="mmo:MMOB4820"/>
<dbReference type="eggNOG" id="COG0240">
    <property type="taxonomic scope" value="Bacteria"/>
</dbReference>
<dbReference type="HOGENOM" id="CLU_033449_0_0_14"/>
<dbReference type="UniPathway" id="UPA00940"/>
<dbReference type="Proteomes" id="UP000009072">
    <property type="component" value="Chromosome"/>
</dbReference>
<dbReference type="GO" id="GO:0005829">
    <property type="term" value="C:cytosol"/>
    <property type="evidence" value="ECO:0007669"/>
    <property type="project" value="TreeGrafter"/>
</dbReference>
<dbReference type="GO" id="GO:0047952">
    <property type="term" value="F:glycerol-3-phosphate dehydrogenase [NAD(P)+] activity"/>
    <property type="evidence" value="ECO:0007669"/>
    <property type="project" value="UniProtKB-UniRule"/>
</dbReference>
<dbReference type="GO" id="GO:0051287">
    <property type="term" value="F:NAD binding"/>
    <property type="evidence" value="ECO:0007669"/>
    <property type="project" value="InterPro"/>
</dbReference>
<dbReference type="GO" id="GO:0005975">
    <property type="term" value="P:carbohydrate metabolic process"/>
    <property type="evidence" value="ECO:0007669"/>
    <property type="project" value="InterPro"/>
</dbReference>
<dbReference type="GO" id="GO:0046167">
    <property type="term" value="P:glycerol-3-phosphate biosynthetic process"/>
    <property type="evidence" value="ECO:0007669"/>
    <property type="project" value="UniProtKB-UniRule"/>
</dbReference>
<dbReference type="GO" id="GO:0046168">
    <property type="term" value="P:glycerol-3-phosphate catabolic process"/>
    <property type="evidence" value="ECO:0007669"/>
    <property type="project" value="InterPro"/>
</dbReference>
<dbReference type="GO" id="GO:0006650">
    <property type="term" value="P:glycerophospholipid metabolic process"/>
    <property type="evidence" value="ECO:0007669"/>
    <property type="project" value="UniProtKB-UniRule"/>
</dbReference>
<dbReference type="GO" id="GO:0008654">
    <property type="term" value="P:phospholipid biosynthetic process"/>
    <property type="evidence" value="ECO:0007669"/>
    <property type="project" value="UniProtKB-KW"/>
</dbReference>
<dbReference type="Gene3D" id="1.10.1040.10">
    <property type="entry name" value="N-(1-d-carboxylethyl)-l-norvaline Dehydrogenase, domain 2"/>
    <property type="match status" value="1"/>
</dbReference>
<dbReference type="Gene3D" id="3.40.50.720">
    <property type="entry name" value="NAD(P)-binding Rossmann-like Domain"/>
    <property type="match status" value="1"/>
</dbReference>
<dbReference type="HAMAP" id="MF_00394">
    <property type="entry name" value="NAD_Glyc3P_dehydrog"/>
    <property type="match status" value="1"/>
</dbReference>
<dbReference type="InterPro" id="IPR008927">
    <property type="entry name" value="6-PGluconate_DH-like_C_sf"/>
</dbReference>
<dbReference type="InterPro" id="IPR013328">
    <property type="entry name" value="6PGD_dom2"/>
</dbReference>
<dbReference type="InterPro" id="IPR006168">
    <property type="entry name" value="G3P_DH_NAD-dep"/>
</dbReference>
<dbReference type="InterPro" id="IPR006109">
    <property type="entry name" value="G3P_DH_NAD-dep_C"/>
</dbReference>
<dbReference type="InterPro" id="IPR011128">
    <property type="entry name" value="G3P_DH_NAD-dep_N"/>
</dbReference>
<dbReference type="InterPro" id="IPR036291">
    <property type="entry name" value="NAD(P)-bd_dom_sf"/>
</dbReference>
<dbReference type="NCBIfam" id="NF000940">
    <property type="entry name" value="PRK00094.1-2"/>
    <property type="match status" value="1"/>
</dbReference>
<dbReference type="PANTHER" id="PTHR11728">
    <property type="entry name" value="GLYCEROL-3-PHOSPHATE DEHYDROGENASE"/>
    <property type="match status" value="1"/>
</dbReference>
<dbReference type="PANTHER" id="PTHR11728:SF1">
    <property type="entry name" value="GLYCEROL-3-PHOSPHATE DEHYDROGENASE [NAD(+)] 2, CHLOROPLASTIC"/>
    <property type="match status" value="1"/>
</dbReference>
<dbReference type="Pfam" id="PF07479">
    <property type="entry name" value="NAD_Gly3P_dh_C"/>
    <property type="match status" value="1"/>
</dbReference>
<dbReference type="Pfam" id="PF01210">
    <property type="entry name" value="NAD_Gly3P_dh_N"/>
    <property type="match status" value="1"/>
</dbReference>
<dbReference type="PIRSF" id="PIRSF000114">
    <property type="entry name" value="Glycerol-3-P_dh"/>
    <property type="match status" value="1"/>
</dbReference>
<dbReference type="PRINTS" id="PR00077">
    <property type="entry name" value="GPDHDRGNASE"/>
</dbReference>
<dbReference type="SUPFAM" id="SSF48179">
    <property type="entry name" value="6-phosphogluconate dehydrogenase C-terminal domain-like"/>
    <property type="match status" value="1"/>
</dbReference>
<dbReference type="SUPFAM" id="SSF51735">
    <property type="entry name" value="NAD(P)-binding Rossmann-fold domains"/>
    <property type="match status" value="1"/>
</dbReference>
<dbReference type="PROSITE" id="PS00957">
    <property type="entry name" value="NAD_G3PDH"/>
    <property type="match status" value="1"/>
</dbReference>
<name>GPDA_MYCM1</name>
<evidence type="ECO:0000255" key="1">
    <source>
        <dbReference type="HAMAP-Rule" id="MF_00394"/>
    </source>
</evidence>
<evidence type="ECO:0000305" key="2"/>
<organism>
    <name type="scientific">Mycoplasma mobile (strain ATCC 43663 / 163K / NCTC 11711)</name>
    <name type="common">Mesomycoplasma mobile</name>
    <dbReference type="NCBI Taxonomy" id="267748"/>
    <lineage>
        <taxon>Bacteria</taxon>
        <taxon>Bacillati</taxon>
        <taxon>Mycoplasmatota</taxon>
        <taxon>Mycoplasmoidales</taxon>
        <taxon>Metamycoplasmataceae</taxon>
        <taxon>Mesomycoplasma</taxon>
    </lineage>
</organism>
<proteinExistence type="inferred from homology"/>
<keyword id="KW-0963">Cytoplasm</keyword>
<keyword id="KW-0444">Lipid biosynthesis</keyword>
<keyword id="KW-0443">Lipid metabolism</keyword>
<keyword id="KW-0520">NAD</keyword>
<keyword id="KW-0521">NADP</keyword>
<keyword id="KW-0547">Nucleotide-binding</keyword>
<keyword id="KW-0560">Oxidoreductase</keyword>
<keyword id="KW-0594">Phospholipid biosynthesis</keyword>
<keyword id="KW-1208">Phospholipid metabolism</keyword>
<keyword id="KW-1185">Reference proteome</keyword>
<accession>Q6KHG2</accession>